<comment type="function">
    <text evidence="1">Specifically methylates position 2 of adenine 2503 in 23S rRNA and position 2 of adenine 37 in tRNAs. m2A2503 modification seems to play a crucial role in the proofreading step occurring at the peptidyl transferase center and thus would serve to optimize ribosomal fidelity.</text>
</comment>
<comment type="catalytic activity">
    <reaction evidence="1">
        <text>adenosine(2503) in 23S rRNA + 2 reduced [2Fe-2S]-[ferredoxin] + 2 S-adenosyl-L-methionine = 2-methyladenosine(2503) in 23S rRNA + 5'-deoxyadenosine + L-methionine + 2 oxidized [2Fe-2S]-[ferredoxin] + S-adenosyl-L-homocysteine</text>
        <dbReference type="Rhea" id="RHEA:42916"/>
        <dbReference type="Rhea" id="RHEA-COMP:10000"/>
        <dbReference type="Rhea" id="RHEA-COMP:10001"/>
        <dbReference type="Rhea" id="RHEA-COMP:10152"/>
        <dbReference type="Rhea" id="RHEA-COMP:10282"/>
        <dbReference type="ChEBI" id="CHEBI:17319"/>
        <dbReference type="ChEBI" id="CHEBI:33737"/>
        <dbReference type="ChEBI" id="CHEBI:33738"/>
        <dbReference type="ChEBI" id="CHEBI:57844"/>
        <dbReference type="ChEBI" id="CHEBI:57856"/>
        <dbReference type="ChEBI" id="CHEBI:59789"/>
        <dbReference type="ChEBI" id="CHEBI:74411"/>
        <dbReference type="ChEBI" id="CHEBI:74497"/>
        <dbReference type="EC" id="2.1.1.192"/>
    </reaction>
</comment>
<comment type="catalytic activity">
    <reaction evidence="1">
        <text>adenosine(37) in tRNA + 2 reduced [2Fe-2S]-[ferredoxin] + 2 S-adenosyl-L-methionine = 2-methyladenosine(37) in tRNA + 5'-deoxyadenosine + L-methionine + 2 oxidized [2Fe-2S]-[ferredoxin] + S-adenosyl-L-homocysteine</text>
        <dbReference type="Rhea" id="RHEA:43332"/>
        <dbReference type="Rhea" id="RHEA-COMP:10000"/>
        <dbReference type="Rhea" id="RHEA-COMP:10001"/>
        <dbReference type="Rhea" id="RHEA-COMP:10162"/>
        <dbReference type="Rhea" id="RHEA-COMP:10485"/>
        <dbReference type="ChEBI" id="CHEBI:17319"/>
        <dbReference type="ChEBI" id="CHEBI:33737"/>
        <dbReference type="ChEBI" id="CHEBI:33738"/>
        <dbReference type="ChEBI" id="CHEBI:57844"/>
        <dbReference type="ChEBI" id="CHEBI:57856"/>
        <dbReference type="ChEBI" id="CHEBI:59789"/>
        <dbReference type="ChEBI" id="CHEBI:74411"/>
        <dbReference type="ChEBI" id="CHEBI:74497"/>
        <dbReference type="EC" id="2.1.1.192"/>
    </reaction>
</comment>
<comment type="cofactor">
    <cofactor evidence="1">
        <name>[4Fe-4S] cluster</name>
        <dbReference type="ChEBI" id="CHEBI:49883"/>
    </cofactor>
    <text evidence="1">Binds 1 [4Fe-4S] cluster. The cluster is coordinated with 3 cysteines and an exchangeable S-adenosyl-L-methionine.</text>
</comment>
<comment type="subcellular location">
    <subcellularLocation>
        <location evidence="1">Cytoplasm</location>
    </subcellularLocation>
</comment>
<comment type="miscellaneous">
    <text evidence="1">Reaction proceeds by a ping-pong mechanism involving intermediate methylation of a conserved cysteine residue.</text>
</comment>
<comment type="similarity">
    <text evidence="1">Belongs to the radical SAM superfamily. RlmN family.</text>
</comment>
<dbReference type="EC" id="2.1.1.192" evidence="1"/>
<dbReference type="EMBL" id="CP000469">
    <property type="protein sequence ID" value="ABK47461.1"/>
    <property type="molecule type" value="Genomic_DNA"/>
</dbReference>
<dbReference type="RefSeq" id="WP_011716310.1">
    <property type="nucleotide sequence ID" value="NC_008577.1"/>
</dbReference>
<dbReference type="SMR" id="A0KUJ2"/>
<dbReference type="STRING" id="94122.Shewana3_1226"/>
<dbReference type="KEGG" id="shn:Shewana3_1226"/>
<dbReference type="eggNOG" id="COG0820">
    <property type="taxonomic scope" value="Bacteria"/>
</dbReference>
<dbReference type="HOGENOM" id="CLU_029101_2_0_6"/>
<dbReference type="OrthoDB" id="9793973at2"/>
<dbReference type="Proteomes" id="UP000002589">
    <property type="component" value="Chromosome"/>
</dbReference>
<dbReference type="GO" id="GO:0005737">
    <property type="term" value="C:cytoplasm"/>
    <property type="evidence" value="ECO:0007669"/>
    <property type="project" value="UniProtKB-SubCell"/>
</dbReference>
<dbReference type="GO" id="GO:0051539">
    <property type="term" value="F:4 iron, 4 sulfur cluster binding"/>
    <property type="evidence" value="ECO:0007669"/>
    <property type="project" value="UniProtKB-UniRule"/>
</dbReference>
<dbReference type="GO" id="GO:0046872">
    <property type="term" value="F:metal ion binding"/>
    <property type="evidence" value="ECO:0007669"/>
    <property type="project" value="UniProtKB-KW"/>
</dbReference>
<dbReference type="GO" id="GO:0070040">
    <property type="term" value="F:rRNA (adenine(2503)-C2-)-methyltransferase activity"/>
    <property type="evidence" value="ECO:0007669"/>
    <property type="project" value="UniProtKB-UniRule"/>
</dbReference>
<dbReference type="GO" id="GO:0019843">
    <property type="term" value="F:rRNA binding"/>
    <property type="evidence" value="ECO:0007669"/>
    <property type="project" value="UniProtKB-UniRule"/>
</dbReference>
<dbReference type="GO" id="GO:0002935">
    <property type="term" value="F:tRNA (adenine(37)-C2)-methyltransferase activity"/>
    <property type="evidence" value="ECO:0007669"/>
    <property type="project" value="UniProtKB-UniRule"/>
</dbReference>
<dbReference type="GO" id="GO:0000049">
    <property type="term" value="F:tRNA binding"/>
    <property type="evidence" value="ECO:0007669"/>
    <property type="project" value="UniProtKB-UniRule"/>
</dbReference>
<dbReference type="GO" id="GO:0070475">
    <property type="term" value="P:rRNA base methylation"/>
    <property type="evidence" value="ECO:0007669"/>
    <property type="project" value="UniProtKB-UniRule"/>
</dbReference>
<dbReference type="GO" id="GO:0030488">
    <property type="term" value="P:tRNA methylation"/>
    <property type="evidence" value="ECO:0007669"/>
    <property type="project" value="UniProtKB-UniRule"/>
</dbReference>
<dbReference type="CDD" id="cd01335">
    <property type="entry name" value="Radical_SAM"/>
    <property type="match status" value="1"/>
</dbReference>
<dbReference type="FunFam" id="1.10.150.530:FF:000003">
    <property type="entry name" value="Dual-specificity RNA methyltransferase RlmN"/>
    <property type="match status" value="1"/>
</dbReference>
<dbReference type="FunFam" id="3.20.20.70:FF:000008">
    <property type="entry name" value="Dual-specificity RNA methyltransferase RlmN"/>
    <property type="match status" value="1"/>
</dbReference>
<dbReference type="Gene3D" id="1.10.150.530">
    <property type="match status" value="1"/>
</dbReference>
<dbReference type="Gene3D" id="3.20.20.70">
    <property type="entry name" value="Aldolase class I"/>
    <property type="match status" value="1"/>
</dbReference>
<dbReference type="HAMAP" id="MF_01849">
    <property type="entry name" value="RNA_methyltr_RlmN"/>
    <property type="match status" value="1"/>
</dbReference>
<dbReference type="InterPro" id="IPR013785">
    <property type="entry name" value="Aldolase_TIM"/>
</dbReference>
<dbReference type="InterPro" id="IPR040072">
    <property type="entry name" value="Methyltransferase_A"/>
</dbReference>
<dbReference type="InterPro" id="IPR048641">
    <property type="entry name" value="RlmN_N"/>
</dbReference>
<dbReference type="InterPro" id="IPR027492">
    <property type="entry name" value="RNA_MTrfase_RlmN"/>
</dbReference>
<dbReference type="InterPro" id="IPR004383">
    <property type="entry name" value="rRNA_lsu_MTrfase_RlmN/Cfr"/>
</dbReference>
<dbReference type="InterPro" id="IPR007197">
    <property type="entry name" value="rSAM"/>
</dbReference>
<dbReference type="NCBIfam" id="NF008396">
    <property type="entry name" value="PRK11194.1"/>
    <property type="match status" value="1"/>
</dbReference>
<dbReference type="NCBIfam" id="TIGR00048">
    <property type="entry name" value="rRNA_mod_RlmN"/>
    <property type="match status" value="1"/>
</dbReference>
<dbReference type="PANTHER" id="PTHR30544">
    <property type="entry name" value="23S RRNA METHYLTRANSFERASE"/>
    <property type="match status" value="1"/>
</dbReference>
<dbReference type="PANTHER" id="PTHR30544:SF5">
    <property type="entry name" value="RADICAL SAM CORE DOMAIN-CONTAINING PROTEIN"/>
    <property type="match status" value="1"/>
</dbReference>
<dbReference type="Pfam" id="PF04055">
    <property type="entry name" value="Radical_SAM"/>
    <property type="match status" value="1"/>
</dbReference>
<dbReference type="Pfam" id="PF21016">
    <property type="entry name" value="RlmN_N"/>
    <property type="match status" value="1"/>
</dbReference>
<dbReference type="PIRSF" id="PIRSF006004">
    <property type="entry name" value="CHP00048"/>
    <property type="match status" value="1"/>
</dbReference>
<dbReference type="SFLD" id="SFLDF00275">
    <property type="entry name" value="adenosine_C2_methyltransferase"/>
    <property type="match status" value="1"/>
</dbReference>
<dbReference type="SFLD" id="SFLDG01062">
    <property type="entry name" value="methyltransferase_(Class_A)"/>
    <property type="match status" value="1"/>
</dbReference>
<dbReference type="SUPFAM" id="SSF102114">
    <property type="entry name" value="Radical SAM enzymes"/>
    <property type="match status" value="1"/>
</dbReference>
<dbReference type="PROSITE" id="PS51918">
    <property type="entry name" value="RADICAL_SAM"/>
    <property type="match status" value="1"/>
</dbReference>
<accession>A0KUJ2</accession>
<organism>
    <name type="scientific">Shewanella sp. (strain ANA-3)</name>
    <dbReference type="NCBI Taxonomy" id="94122"/>
    <lineage>
        <taxon>Bacteria</taxon>
        <taxon>Pseudomonadati</taxon>
        <taxon>Pseudomonadota</taxon>
        <taxon>Gammaproteobacteria</taxon>
        <taxon>Alteromonadales</taxon>
        <taxon>Shewanellaceae</taxon>
        <taxon>Shewanella</taxon>
    </lineage>
</organism>
<evidence type="ECO:0000255" key="1">
    <source>
        <dbReference type="HAMAP-Rule" id="MF_01849"/>
    </source>
</evidence>
<evidence type="ECO:0000255" key="2">
    <source>
        <dbReference type="PROSITE-ProRule" id="PRU01266"/>
    </source>
</evidence>
<sequence>MSEKKINLLDLDRKAMRALFADLGEKPFRADQLMKWIYHFGVSDFEEMTNINKVLRQKLAARCEIVAPEISSYQKSTDGTIKFAIHVGEGQEVETVYIPEDDRATLCVSSQVGCALECTFCSTAQQGFNRNLTVSEIVGQIWRVSHFLGFAKETGERPITNVVMMGMGEPLLNLANVIPAMDIMLDDFGFSLSKRRVTLSTSGVVPALDKLGDALDVALAVSIHAPNDELRDILVPVNKKYPLQEFLAGIRRYIAKSNANRGRVTVEYVMLDHINDSTEQAHELAQLMKDTPCKVNLIPFNPYPGSPYGRSSNSRIDRFSKVLMEYGLTVIVRKTRGDDIDAACGQLAGDIRDRTKRLAKKRMQENQISVTMN</sequence>
<name>RLMN_SHESA</name>
<protein>
    <recommendedName>
        <fullName evidence="1">Dual-specificity RNA methyltransferase RlmN</fullName>
        <ecNumber evidence="1">2.1.1.192</ecNumber>
    </recommendedName>
    <alternativeName>
        <fullName evidence="1">23S rRNA (adenine(2503)-C(2))-methyltransferase</fullName>
    </alternativeName>
    <alternativeName>
        <fullName evidence="1">23S rRNA m2A2503 methyltransferase</fullName>
    </alternativeName>
    <alternativeName>
        <fullName evidence="1">Ribosomal RNA large subunit methyltransferase N</fullName>
    </alternativeName>
    <alternativeName>
        <fullName evidence="1">tRNA (adenine(37)-C(2))-methyltransferase</fullName>
    </alternativeName>
    <alternativeName>
        <fullName evidence="1">tRNA m2A37 methyltransferase</fullName>
    </alternativeName>
</protein>
<gene>
    <name evidence="1" type="primary">rlmN</name>
    <name type="ordered locus">Shewana3_1226</name>
</gene>
<keyword id="KW-0004">4Fe-4S</keyword>
<keyword id="KW-0963">Cytoplasm</keyword>
<keyword id="KW-1015">Disulfide bond</keyword>
<keyword id="KW-0408">Iron</keyword>
<keyword id="KW-0411">Iron-sulfur</keyword>
<keyword id="KW-0479">Metal-binding</keyword>
<keyword id="KW-0489">Methyltransferase</keyword>
<keyword id="KW-0698">rRNA processing</keyword>
<keyword id="KW-0949">S-adenosyl-L-methionine</keyword>
<keyword id="KW-0808">Transferase</keyword>
<keyword id="KW-0819">tRNA processing</keyword>
<feature type="chain" id="PRO_0000350404" description="Dual-specificity RNA methyltransferase RlmN">
    <location>
        <begin position="1"/>
        <end position="373"/>
    </location>
</feature>
<feature type="domain" description="Radical SAM core" evidence="2">
    <location>
        <begin position="100"/>
        <end position="339"/>
    </location>
</feature>
<feature type="active site" description="Proton acceptor" evidence="1">
    <location>
        <position position="94"/>
    </location>
</feature>
<feature type="active site" description="S-methylcysteine intermediate" evidence="1">
    <location>
        <position position="344"/>
    </location>
</feature>
<feature type="binding site" evidence="1">
    <location>
        <position position="114"/>
    </location>
    <ligand>
        <name>[4Fe-4S] cluster</name>
        <dbReference type="ChEBI" id="CHEBI:49883"/>
        <note>4Fe-4S-S-AdoMet</note>
    </ligand>
</feature>
<feature type="binding site" evidence="1">
    <location>
        <position position="118"/>
    </location>
    <ligand>
        <name>[4Fe-4S] cluster</name>
        <dbReference type="ChEBI" id="CHEBI:49883"/>
        <note>4Fe-4S-S-AdoMet</note>
    </ligand>
</feature>
<feature type="binding site" evidence="1">
    <location>
        <position position="121"/>
    </location>
    <ligand>
        <name>[4Fe-4S] cluster</name>
        <dbReference type="ChEBI" id="CHEBI:49883"/>
        <note>4Fe-4S-S-AdoMet</note>
    </ligand>
</feature>
<feature type="binding site" evidence="1">
    <location>
        <begin position="168"/>
        <end position="169"/>
    </location>
    <ligand>
        <name>S-adenosyl-L-methionine</name>
        <dbReference type="ChEBI" id="CHEBI:59789"/>
    </ligand>
</feature>
<feature type="binding site" evidence="1">
    <location>
        <position position="200"/>
    </location>
    <ligand>
        <name>S-adenosyl-L-methionine</name>
        <dbReference type="ChEBI" id="CHEBI:59789"/>
    </ligand>
</feature>
<feature type="binding site" evidence="1">
    <location>
        <begin position="222"/>
        <end position="224"/>
    </location>
    <ligand>
        <name>S-adenosyl-L-methionine</name>
        <dbReference type="ChEBI" id="CHEBI:59789"/>
    </ligand>
</feature>
<feature type="binding site" evidence="1">
    <location>
        <position position="301"/>
    </location>
    <ligand>
        <name>S-adenosyl-L-methionine</name>
        <dbReference type="ChEBI" id="CHEBI:59789"/>
    </ligand>
</feature>
<feature type="disulfide bond" description="(transient)" evidence="1">
    <location>
        <begin position="107"/>
        <end position="344"/>
    </location>
</feature>
<reference key="1">
    <citation type="submission" date="2006-09" db="EMBL/GenBank/DDBJ databases">
        <title>Complete sequence of chromosome 1 of Shewanella sp. ANA-3.</title>
        <authorList>
            <person name="Copeland A."/>
            <person name="Lucas S."/>
            <person name="Lapidus A."/>
            <person name="Barry K."/>
            <person name="Detter J.C."/>
            <person name="Glavina del Rio T."/>
            <person name="Hammon N."/>
            <person name="Israni S."/>
            <person name="Dalin E."/>
            <person name="Tice H."/>
            <person name="Pitluck S."/>
            <person name="Chertkov O."/>
            <person name="Brettin T."/>
            <person name="Bruce D."/>
            <person name="Han C."/>
            <person name="Tapia R."/>
            <person name="Gilna P."/>
            <person name="Schmutz J."/>
            <person name="Larimer F."/>
            <person name="Land M."/>
            <person name="Hauser L."/>
            <person name="Kyrpides N."/>
            <person name="Kim E."/>
            <person name="Newman D."/>
            <person name="Salticov C."/>
            <person name="Konstantinidis K."/>
            <person name="Klappenback J."/>
            <person name="Tiedje J."/>
            <person name="Richardson P."/>
        </authorList>
    </citation>
    <scope>NUCLEOTIDE SEQUENCE [LARGE SCALE GENOMIC DNA]</scope>
    <source>
        <strain>ANA-3</strain>
    </source>
</reference>
<proteinExistence type="inferred from homology"/>